<organism>
    <name type="scientific">Marinomonas sp. (strain MWYL1)</name>
    <dbReference type="NCBI Taxonomy" id="400668"/>
    <lineage>
        <taxon>Bacteria</taxon>
        <taxon>Pseudomonadati</taxon>
        <taxon>Pseudomonadota</taxon>
        <taxon>Gammaproteobacteria</taxon>
        <taxon>Oceanospirillales</taxon>
        <taxon>Oceanospirillaceae</taxon>
        <taxon>Marinomonas</taxon>
    </lineage>
</organism>
<dbReference type="EC" id="6.5.1.2" evidence="1"/>
<dbReference type="EMBL" id="CP000749">
    <property type="protein sequence ID" value="ABR72308.1"/>
    <property type="molecule type" value="Genomic_DNA"/>
</dbReference>
<dbReference type="SMR" id="A6W0S9"/>
<dbReference type="STRING" id="400668.Mmwyl1_3405"/>
<dbReference type="KEGG" id="mmw:Mmwyl1_3405"/>
<dbReference type="eggNOG" id="COG0272">
    <property type="taxonomic scope" value="Bacteria"/>
</dbReference>
<dbReference type="HOGENOM" id="CLU_007764_2_1_6"/>
<dbReference type="OrthoDB" id="9759736at2"/>
<dbReference type="GO" id="GO:0005829">
    <property type="term" value="C:cytosol"/>
    <property type="evidence" value="ECO:0007669"/>
    <property type="project" value="TreeGrafter"/>
</dbReference>
<dbReference type="GO" id="GO:0003677">
    <property type="term" value="F:DNA binding"/>
    <property type="evidence" value="ECO:0007669"/>
    <property type="project" value="InterPro"/>
</dbReference>
<dbReference type="GO" id="GO:0003911">
    <property type="term" value="F:DNA ligase (NAD+) activity"/>
    <property type="evidence" value="ECO:0007669"/>
    <property type="project" value="UniProtKB-UniRule"/>
</dbReference>
<dbReference type="GO" id="GO:0046872">
    <property type="term" value="F:metal ion binding"/>
    <property type="evidence" value="ECO:0007669"/>
    <property type="project" value="UniProtKB-KW"/>
</dbReference>
<dbReference type="GO" id="GO:0006281">
    <property type="term" value="P:DNA repair"/>
    <property type="evidence" value="ECO:0007669"/>
    <property type="project" value="UniProtKB-KW"/>
</dbReference>
<dbReference type="GO" id="GO:0006260">
    <property type="term" value="P:DNA replication"/>
    <property type="evidence" value="ECO:0007669"/>
    <property type="project" value="UniProtKB-KW"/>
</dbReference>
<dbReference type="CDD" id="cd17748">
    <property type="entry name" value="BRCT_DNA_ligase_like"/>
    <property type="match status" value="1"/>
</dbReference>
<dbReference type="CDD" id="cd00114">
    <property type="entry name" value="LIGANc"/>
    <property type="match status" value="1"/>
</dbReference>
<dbReference type="FunFam" id="1.10.150.20:FF:000006">
    <property type="entry name" value="DNA ligase"/>
    <property type="match status" value="1"/>
</dbReference>
<dbReference type="FunFam" id="1.10.150.20:FF:000007">
    <property type="entry name" value="DNA ligase"/>
    <property type="match status" value="1"/>
</dbReference>
<dbReference type="FunFam" id="2.40.50.140:FF:000012">
    <property type="entry name" value="DNA ligase"/>
    <property type="match status" value="1"/>
</dbReference>
<dbReference type="FunFam" id="3.30.470.30:FF:000001">
    <property type="entry name" value="DNA ligase"/>
    <property type="match status" value="1"/>
</dbReference>
<dbReference type="Gene3D" id="6.20.10.30">
    <property type="match status" value="1"/>
</dbReference>
<dbReference type="Gene3D" id="1.10.150.20">
    <property type="entry name" value="5' to 3' exonuclease, C-terminal subdomain"/>
    <property type="match status" value="2"/>
</dbReference>
<dbReference type="Gene3D" id="3.40.50.10190">
    <property type="entry name" value="BRCT domain"/>
    <property type="match status" value="1"/>
</dbReference>
<dbReference type="Gene3D" id="3.30.470.30">
    <property type="entry name" value="DNA ligase/mRNA capping enzyme"/>
    <property type="match status" value="1"/>
</dbReference>
<dbReference type="Gene3D" id="1.10.287.610">
    <property type="entry name" value="Helix hairpin bin"/>
    <property type="match status" value="1"/>
</dbReference>
<dbReference type="Gene3D" id="2.40.50.140">
    <property type="entry name" value="Nucleic acid-binding proteins"/>
    <property type="match status" value="1"/>
</dbReference>
<dbReference type="HAMAP" id="MF_01588">
    <property type="entry name" value="DNA_ligase_A"/>
    <property type="match status" value="1"/>
</dbReference>
<dbReference type="InterPro" id="IPR001357">
    <property type="entry name" value="BRCT_dom"/>
</dbReference>
<dbReference type="InterPro" id="IPR036420">
    <property type="entry name" value="BRCT_dom_sf"/>
</dbReference>
<dbReference type="InterPro" id="IPR041663">
    <property type="entry name" value="DisA/LigA_HHH"/>
</dbReference>
<dbReference type="InterPro" id="IPR001679">
    <property type="entry name" value="DNA_ligase"/>
</dbReference>
<dbReference type="InterPro" id="IPR018239">
    <property type="entry name" value="DNA_ligase_AS"/>
</dbReference>
<dbReference type="InterPro" id="IPR033136">
    <property type="entry name" value="DNA_ligase_CS"/>
</dbReference>
<dbReference type="InterPro" id="IPR013839">
    <property type="entry name" value="DNAligase_adenylation"/>
</dbReference>
<dbReference type="InterPro" id="IPR013840">
    <property type="entry name" value="DNAligase_N"/>
</dbReference>
<dbReference type="InterPro" id="IPR003583">
    <property type="entry name" value="Hlx-hairpin-Hlx_DNA-bd_motif"/>
</dbReference>
<dbReference type="InterPro" id="IPR012340">
    <property type="entry name" value="NA-bd_OB-fold"/>
</dbReference>
<dbReference type="InterPro" id="IPR004150">
    <property type="entry name" value="NAD_DNA_ligase_OB"/>
</dbReference>
<dbReference type="InterPro" id="IPR010994">
    <property type="entry name" value="RuvA_2-like"/>
</dbReference>
<dbReference type="InterPro" id="IPR004149">
    <property type="entry name" value="Znf_DNAligase_C4"/>
</dbReference>
<dbReference type="NCBIfam" id="TIGR00575">
    <property type="entry name" value="dnlj"/>
    <property type="match status" value="1"/>
</dbReference>
<dbReference type="NCBIfam" id="NF005932">
    <property type="entry name" value="PRK07956.1"/>
    <property type="match status" value="1"/>
</dbReference>
<dbReference type="PANTHER" id="PTHR23389">
    <property type="entry name" value="CHROMOSOME TRANSMISSION FIDELITY FACTOR 18"/>
    <property type="match status" value="1"/>
</dbReference>
<dbReference type="PANTHER" id="PTHR23389:SF9">
    <property type="entry name" value="DNA LIGASE"/>
    <property type="match status" value="1"/>
</dbReference>
<dbReference type="Pfam" id="PF00533">
    <property type="entry name" value="BRCT"/>
    <property type="match status" value="1"/>
</dbReference>
<dbReference type="Pfam" id="PF01653">
    <property type="entry name" value="DNA_ligase_aden"/>
    <property type="match status" value="1"/>
</dbReference>
<dbReference type="Pfam" id="PF03120">
    <property type="entry name" value="DNA_ligase_OB"/>
    <property type="match status" value="1"/>
</dbReference>
<dbReference type="Pfam" id="PF03119">
    <property type="entry name" value="DNA_ligase_ZBD"/>
    <property type="match status" value="1"/>
</dbReference>
<dbReference type="Pfam" id="PF12826">
    <property type="entry name" value="HHH_2"/>
    <property type="match status" value="1"/>
</dbReference>
<dbReference type="Pfam" id="PF14520">
    <property type="entry name" value="HHH_5"/>
    <property type="match status" value="1"/>
</dbReference>
<dbReference type="PIRSF" id="PIRSF001604">
    <property type="entry name" value="LigA"/>
    <property type="match status" value="1"/>
</dbReference>
<dbReference type="SMART" id="SM00292">
    <property type="entry name" value="BRCT"/>
    <property type="match status" value="1"/>
</dbReference>
<dbReference type="SMART" id="SM00278">
    <property type="entry name" value="HhH1"/>
    <property type="match status" value="3"/>
</dbReference>
<dbReference type="SMART" id="SM00532">
    <property type="entry name" value="LIGANc"/>
    <property type="match status" value="1"/>
</dbReference>
<dbReference type="SUPFAM" id="SSF52113">
    <property type="entry name" value="BRCT domain"/>
    <property type="match status" value="1"/>
</dbReference>
<dbReference type="SUPFAM" id="SSF56091">
    <property type="entry name" value="DNA ligase/mRNA capping enzyme, catalytic domain"/>
    <property type="match status" value="1"/>
</dbReference>
<dbReference type="SUPFAM" id="SSF50249">
    <property type="entry name" value="Nucleic acid-binding proteins"/>
    <property type="match status" value="1"/>
</dbReference>
<dbReference type="SUPFAM" id="SSF47781">
    <property type="entry name" value="RuvA domain 2-like"/>
    <property type="match status" value="1"/>
</dbReference>
<dbReference type="PROSITE" id="PS50172">
    <property type="entry name" value="BRCT"/>
    <property type="match status" value="1"/>
</dbReference>
<dbReference type="PROSITE" id="PS01055">
    <property type="entry name" value="DNA_LIGASE_N1"/>
    <property type="match status" value="1"/>
</dbReference>
<dbReference type="PROSITE" id="PS01056">
    <property type="entry name" value="DNA_LIGASE_N2"/>
    <property type="match status" value="1"/>
</dbReference>
<proteinExistence type="inferred from homology"/>
<keyword id="KW-0227">DNA damage</keyword>
<keyword id="KW-0234">DNA repair</keyword>
<keyword id="KW-0235">DNA replication</keyword>
<keyword id="KW-0436">Ligase</keyword>
<keyword id="KW-0460">Magnesium</keyword>
<keyword id="KW-0464">Manganese</keyword>
<keyword id="KW-0479">Metal-binding</keyword>
<keyword id="KW-0520">NAD</keyword>
<keyword id="KW-0862">Zinc</keyword>
<reference key="1">
    <citation type="submission" date="2007-06" db="EMBL/GenBank/DDBJ databases">
        <title>Complete sequence of Marinomonas sp. MWYL1.</title>
        <authorList>
            <consortium name="US DOE Joint Genome Institute"/>
            <person name="Copeland A."/>
            <person name="Lucas S."/>
            <person name="Lapidus A."/>
            <person name="Barry K."/>
            <person name="Glavina del Rio T."/>
            <person name="Dalin E."/>
            <person name="Tice H."/>
            <person name="Pitluck S."/>
            <person name="Kiss H."/>
            <person name="Brettin T."/>
            <person name="Bruce D."/>
            <person name="Detter J.C."/>
            <person name="Han C."/>
            <person name="Schmutz J."/>
            <person name="Larimer F."/>
            <person name="Land M."/>
            <person name="Hauser L."/>
            <person name="Kyrpides N."/>
            <person name="Kim E."/>
            <person name="Johnston A.W.B."/>
            <person name="Todd J.D."/>
            <person name="Rogers R."/>
            <person name="Wexler M."/>
            <person name="Bond P.L."/>
            <person name="Li Y."/>
            <person name="Richardson P."/>
        </authorList>
    </citation>
    <scope>NUCLEOTIDE SEQUENCE [LARGE SCALE GENOMIC DNA]</scope>
    <source>
        <strain>MWYL1</strain>
    </source>
</reference>
<comment type="function">
    <text evidence="1">DNA ligase that catalyzes the formation of phosphodiester linkages between 5'-phosphoryl and 3'-hydroxyl groups in double-stranded DNA using NAD as a coenzyme and as the energy source for the reaction. It is essential for DNA replication and repair of damaged DNA.</text>
</comment>
<comment type="catalytic activity">
    <reaction evidence="1">
        <text>NAD(+) + (deoxyribonucleotide)n-3'-hydroxyl + 5'-phospho-(deoxyribonucleotide)m = (deoxyribonucleotide)n+m + AMP + beta-nicotinamide D-nucleotide.</text>
        <dbReference type="EC" id="6.5.1.2"/>
    </reaction>
</comment>
<comment type="cofactor">
    <cofactor evidence="1">
        <name>Mg(2+)</name>
        <dbReference type="ChEBI" id="CHEBI:18420"/>
    </cofactor>
    <cofactor evidence="1">
        <name>Mn(2+)</name>
        <dbReference type="ChEBI" id="CHEBI:29035"/>
    </cofactor>
</comment>
<comment type="similarity">
    <text evidence="1">Belongs to the NAD-dependent DNA ligase family. LigA subfamily.</text>
</comment>
<sequence length="672" mass="74175">MTHQQMLDLIQQLNDYSYAYHVKDEPIVPDAVYDRDYRQLQSIEAEHPEWIQADSPTQRVGEKPDSGFTNVAHTVPMLSLDNAFDNESLADFDQRIRKLLNAEQVTYCCEPKLDGLAISLRYEEGRLVRGVTRGDGLSGEDITSNIKTIYSVPLKLRTKTPPAVLEVRGEIYMPKEGFEKLNALAVEQGEKTFVNPRNAAAGSLRQLDPKVTAKRPLVMCAYSIGYVEGWEQPESHYAGLLQLSEWGFRTNDLMITAEGAQGCIDYYEKLNEKRASLSYDIDGIVYKVDQIALQNQLGFIARAPRWAIARKFPAQEEMTRILGVDFQVGRTGAITPVARLEPVFVGGVTVSNATLHNKDEIARLGVKVNDFVIVHRAGDVIPKVVQVVIDKRPENATEVVFPEACPVCGSDLEQVEGEAVIRCTGGLVCGAQLKESLKHFVSRKAMDIDGLGDKLIEQLVDQQLVKTPVDIFTLSEKKDTLLSMERMGQKSVEKLLASIEIAKSTQFNRFIYSLGIREVGEATARALTSYFTELDDLMAADQETLVEVEDVGPIVAQHVRLFFDQELNRDTIKGLLAAGVVWEKKQQVSADELPLSGKTYVVTGSLSQFSRDQVKDKLQALGAKVSGSVSAKTDCLVAGEKAGSKLTKAQSLNVPIIDEAGVIALLTEHGAI</sequence>
<name>DNLJ_MARMS</name>
<protein>
    <recommendedName>
        <fullName evidence="1">DNA ligase</fullName>
        <ecNumber evidence="1">6.5.1.2</ecNumber>
    </recommendedName>
    <alternativeName>
        <fullName evidence="1">Polydeoxyribonucleotide synthase [NAD(+)]</fullName>
    </alternativeName>
</protein>
<evidence type="ECO:0000255" key="1">
    <source>
        <dbReference type="HAMAP-Rule" id="MF_01588"/>
    </source>
</evidence>
<feature type="chain" id="PRO_0000340359" description="DNA ligase">
    <location>
        <begin position="1"/>
        <end position="672"/>
    </location>
</feature>
<feature type="domain" description="BRCT" evidence="1">
    <location>
        <begin position="590"/>
        <end position="672"/>
    </location>
</feature>
<feature type="active site" description="N6-AMP-lysine intermediate" evidence="1">
    <location>
        <position position="112"/>
    </location>
</feature>
<feature type="binding site" evidence="1">
    <location>
        <begin position="30"/>
        <end position="34"/>
    </location>
    <ligand>
        <name>NAD(+)</name>
        <dbReference type="ChEBI" id="CHEBI:57540"/>
    </ligand>
</feature>
<feature type="binding site" evidence="1">
    <location>
        <begin position="79"/>
        <end position="80"/>
    </location>
    <ligand>
        <name>NAD(+)</name>
        <dbReference type="ChEBI" id="CHEBI:57540"/>
    </ligand>
</feature>
<feature type="binding site" evidence="1">
    <location>
        <position position="110"/>
    </location>
    <ligand>
        <name>NAD(+)</name>
        <dbReference type="ChEBI" id="CHEBI:57540"/>
    </ligand>
</feature>
<feature type="binding site" evidence="1">
    <location>
        <position position="133"/>
    </location>
    <ligand>
        <name>NAD(+)</name>
        <dbReference type="ChEBI" id="CHEBI:57540"/>
    </ligand>
</feature>
<feature type="binding site" evidence="1">
    <location>
        <position position="170"/>
    </location>
    <ligand>
        <name>NAD(+)</name>
        <dbReference type="ChEBI" id="CHEBI:57540"/>
    </ligand>
</feature>
<feature type="binding site" evidence="1">
    <location>
        <position position="287"/>
    </location>
    <ligand>
        <name>NAD(+)</name>
        <dbReference type="ChEBI" id="CHEBI:57540"/>
    </ligand>
</feature>
<feature type="binding site" evidence="1">
    <location>
        <position position="311"/>
    </location>
    <ligand>
        <name>NAD(+)</name>
        <dbReference type="ChEBI" id="CHEBI:57540"/>
    </ligand>
</feature>
<feature type="binding site" evidence="1">
    <location>
        <position position="405"/>
    </location>
    <ligand>
        <name>Zn(2+)</name>
        <dbReference type="ChEBI" id="CHEBI:29105"/>
    </ligand>
</feature>
<feature type="binding site" evidence="1">
    <location>
        <position position="408"/>
    </location>
    <ligand>
        <name>Zn(2+)</name>
        <dbReference type="ChEBI" id="CHEBI:29105"/>
    </ligand>
</feature>
<feature type="binding site" evidence="1">
    <location>
        <position position="423"/>
    </location>
    <ligand>
        <name>Zn(2+)</name>
        <dbReference type="ChEBI" id="CHEBI:29105"/>
    </ligand>
</feature>
<feature type="binding site" evidence="1">
    <location>
        <position position="429"/>
    </location>
    <ligand>
        <name>Zn(2+)</name>
        <dbReference type="ChEBI" id="CHEBI:29105"/>
    </ligand>
</feature>
<accession>A6W0S9</accession>
<gene>
    <name evidence="1" type="primary">ligA</name>
    <name type="ordered locus">Mmwyl1_3405</name>
</gene>